<sequence length="506" mass="54069">MVSIRPDEISAILKQQIEDYDKSVSVSNVGSVLTVGDGIARVYGLQQAMAGELLEFEDGTEGIALNLEDDNVGAVLMGEGLGIQEGSTVKATGKIASVPVGEAMLGRVVNSLGRAIDGKGEIATSETRLIESMAPGIIQRKSVHEPMQTGITAIDAMIPVGRGQRELIIGDRQTGKTAIAIDTILNQKDQDMICVYVAVGQKAASVANVVEVLRERGALDYSVIVAANASEPAALQYLAPYTGASIAEYFMYKGKATLVIYDDLSKQAAAYRQMSLLLRRPPGREAYPGDVFYCHSRLLERAAKLSDAMGKGSMTALPIIETQAGDVSAYIPTNVISITDGQIFLSSDLFNSGLRPAINVGISVSRVGGAAQTKAIKKIAGTLKLELAQFAELAAFSQFASDLDASTQQQLERGKRLRELLKQPQFSPLILAEQVAIVYAGVKGLIDAVPVDKVVDFSRELREYLKSNKPEFITEIQEKKLMSPEAEAILKDAISEVVSTLVASAA</sequence>
<gene>
    <name evidence="2" type="primary">atpA</name>
    <name type="ordered locus">SYNW0494</name>
</gene>
<comment type="function">
    <text evidence="2">Produces ATP from ADP in the presence of a proton gradient across the membrane. The alpha chain is a regulatory subunit.</text>
</comment>
<comment type="catalytic activity">
    <reaction evidence="2">
        <text>ATP + H2O + 4 H(+)(in) = ADP + phosphate + 5 H(+)(out)</text>
        <dbReference type="Rhea" id="RHEA:57720"/>
        <dbReference type="ChEBI" id="CHEBI:15377"/>
        <dbReference type="ChEBI" id="CHEBI:15378"/>
        <dbReference type="ChEBI" id="CHEBI:30616"/>
        <dbReference type="ChEBI" id="CHEBI:43474"/>
        <dbReference type="ChEBI" id="CHEBI:456216"/>
        <dbReference type="EC" id="7.1.2.2"/>
    </reaction>
</comment>
<comment type="subunit">
    <text evidence="1">F-type ATPases have 2 components, CF(1) - the catalytic core - and CF(0) - the membrane proton channel. CF(1) has five subunits: alpha(3), beta(3), gamma(1), delta(1), epsilon(1). CF(0) has four main subunits: a(1), b(1), b'(1) and c(9-12) (By similarity).</text>
</comment>
<comment type="subcellular location">
    <subcellularLocation>
        <location evidence="2">Cellular thylakoid membrane</location>
        <topology evidence="2">Peripheral membrane protein</topology>
    </subcellularLocation>
</comment>
<comment type="similarity">
    <text evidence="2">Belongs to the ATPase alpha/beta chains family.</text>
</comment>
<feature type="chain" id="PRO_0000238382" description="ATP synthase subunit alpha">
    <location>
        <begin position="1"/>
        <end position="506"/>
    </location>
</feature>
<feature type="binding site" evidence="2">
    <location>
        <begin position="170"/>
        <end position="177"/>
    </location>
    <ligand>
        <name>ATP</name>
        <dbReference type="ChEBI" id="CHEBI:30616"/>
    </ligand>
</feature>
<feature type="site" description="Required for activity" evidence="2">
    <location>
        <position position="363"/>
    </location>
</feature>
<protein>
    <recommendedName>
        <fullName evidence="2">ATP synthase subunit alpha</fullName>
        <ecNumber evidence="2">7.1.2.2</ecNumber>
    </recommendedName>
    <alternativeName>
        <fullName evidence="2">ATP synthase F1 sector subunit alpha</fullName>
    </alternativeName>
    <alternativeName>
        <fullName evidence="2">F-ATPase subunit alpha</fullName>
    </alternativeName>
</protein>
<dbReference type="EC" id="7.1.2.2" evidence="2"/>
<dbReference type="EMBL" id="BX569690">
    <property type="protein sequence ID" value="CAE07009.1"/>
    <property type="molecule type" value="Genomic_DNA"/>
</dbReference>
<dbReference type="RefSeq" id="WP_011127365.1">
    <property type="nucleotide sequence ID" value="NC_005070.1"/>
</dbReference>
<dbReference type="SMR" id="Q7U8W5"/>
<dbReference type="STRING" id="84588.SYNW0494"/>
<dbReference type="KEGG" id="syw:SYNW0494"/>
<dbReference type="eggNOG" id="COG0056">
    <property type="taxonomic scope" value="Bacteria"/>
</dbReference>
<dbReference type="HOGENOM" id="CLU_010091_2_1_3"/>
<dbReference type="Proteomes" id="UP000001422">
    <property type="component" value="Chromosome"/>
</dbReference>
<dbReference type="GO" id="GO:0031676">
    <property type="term" value="C:plasma membrane-derived thylakoid membrane"/>
    <property type="evidence" value="ECO:0007669"/>
    <property type="project" value="UniProtKB-SubCell"/>
</dbReference>
<dbReference type="GO" id="GO:0045259">
    <property type="term" value="C:proton-transporting ATP synthase complex"/>
    <property type="evidence" value="ECO:0007669"/>
    <property type="project" value="UniProtKB-KW"/>
</dbReference>
<dbReference type="GO" id="GO:0043531">
    <property type="term" value="F:ADP binding"/>
    <property type="evidence" value="ECO:0007669"/>
    <property type="project" value="TreeGrafter"/>
</dbReference>
<dbReference type="GO" id="GO:0005524">
    <property type="term" value="F:ATP binding"/>
    <property type="evidence" value="ECO:0007669"/>
    <property type="project" value="UniProtKB-UniRule"/>
</dbReference>
<dbReference type="GO" id="GO:0046933">
    <property type="term" value="F:proton-transporting ATP synthase activity, rotational mechanism"/>
    <property type="evidence" value="ECO:0007669"/>
    <property type="project" value="UniProtKB-UniRule"/>
</dbReference>
<dbReference type="CDD" id="cd18113">
    <property type="entry name" value="ATP-synt_F1_alpha_C"/>
    <property type="match status" value="1"/>
</dbReference>
<dbReference type="CDD" id="cd18116">
    <property type="entry name" value="ATP-synt_F1_alpha_N"/>
    <property type="match status" value="1"/>
</dbReference>
<dbReference type="CDD" id="cd01132">
    <property type="entry name" value="F1-ATPase_alpha_CD"/>
    <property type="match status" value="1"/>
</dbReference>
<dbReference type="FunFam" id="1.20.150.20:FF:000001">
    <property type="entry name" value="ATP synthase subunit alpha"/>
    <property type="match status" value="1"/>
</dbReference>
<dbReference type="FunFam" id="2.40.30.20:FF:000001">
    <property type="entry name" value="ATP synthase subunit alpha"/>
    <property type="match status" value="1"/>
</dbReference>
<dbReference type="FunFam" id="3.40.50.300:FF:000002">
    <property type="entry name" value="ATP synthase subunit alpha"/>
    <property type="match status" value="1"/>
</dbReference>
<dbReference type="Gene3D" id="2.40.30.20">
    <property type="match status" value="1"/>
</dbReference>
<dbReference type="Gene3D" id="1.20.150.20">
    <property type="entry name" value="ATP synthase alpha/beta chain, C-terminal domain"/>
    <property type="match status" value="1"/>
</dbReference>
<dbReference type="Gene3D" id="3.40.50.300">
    <property type="entry name" value="P-loop containing nucleotide triphosphate hydrolases"/>
    <property type="match status" value="1"/>
</dbReference>
<dbReference type="HAMAP" id="MF_01346">
    <property type="entry name" value="ATP_synth_alpha_bact"/>
    <property type="match status" value="1"/>
</dbReference>
<dbReference type="InterPro" id="IPR023366">
    <property type="entry name" value="ATP_synth_asu-like_sf"/>
</dbReference>
<dbReference type="InterPro" id="IPR000793">
    <property type="entry name" value="ATP_synth_asu_C"/>
</dbReference>
<dbReference type="InterPro" id="IPR038376">
    <property type="entry name" value="ATP_synth_asu_C_sf"/>
</dbReference>
<dbReference type="InterPro" id="IPR033732">
    <property type="entry name" value="ATP_synth_F1_a_nt-bd_dom"/>
</dbReference>
<dbReference type="InterPro" id="IPR005294">
    <property type="entry name" value="ATP_synth_F1_asu"/>
</dbReference>
<dbReference type="InterPro" id="IPR020003">
    <property type="entry name" value="ATPase_a/bsu_AS"/>
</dbReference>
<dbReference type="InterPro" id="IPR004100">
    <property type="entry name" value="ATPase_F1/V1/A1_a/bsu_N"/>
</dbReference>
<dbReference type="InterPro" id="IPR036121">
    <property type="entry name" value="ATPase_F1/V1/A1_a/bsu_N_sf"/>
</dbReference>
<dbReference type="InterPro" id="IPR000194">
    <property type="entry name" value="ATPase_F1/V1/A1_a/bsu_nucl-bd"/>
</dbReference>
<dbReference type="InterPro" id="IPR027417">
    <property type="entry name" value="P-loop_NTPase"/>
</dbReference>
<dbReference type="NCBIfam" id="TIGR00962">
    <property type="entry name" value="atpA"/>
    <property type="match status" value="1"/>
</dbReference>
<dbReference type="NCBIfam" id="NF009884">
    <property type="entry name" value="PRK13343.1"/>
    <property type="match status" value="1"/>
</dbReference>
<dbReference type="PANTHER" id="PTHR48082">
    <property type="entry name" value="ATP SYNTHASE SUBUNIT ALPHA, MITOCHONDRIAL"/>
    <property type="match status" value="1"/>
</dbReference>
<dbReference type="PANTHER" id="PTHR48082:SF2">
    <property type="entry name" value="ATP SYNTHASE SUBUNIT ALPHA, MITOCHONDRIAL"/>
    <property type="match status" value="1"/>
</dbReference>
<dbReference type="Pfam" id="PF00006">
    <property type="entry name" value="ATP-synt_ab"/>
    <property type="match status" value="1"/>
</dbReference>
<dbReference type="Pfam" id="PF00306">
    <property type="entry name" value="ATP-synt_ab_C"/>
    <property type="match status" value="1"/>
</dbReference>
<dbReference type="Pfam" id="PF02874">
    <property type="entry name" value="ATP-synt_ab_N"/>
    <property type="match status" value="1"/>
</dbReference>
<dbReference type="PIRSF" id="PIRSF039088">
    <property type="entry name" value="F_ATPase_subunit_alpha"/>
    <property type="match status" value="1"/>
</dbReference>
<dbReference type="SUPFAM" id="SSF47917">
    <property type="entry name" value="C-terminal domain of alpha and beta subunits of F1 ATP synthase"/>
    <property type="match status" value="1"/>
</dbReference>
<dbReference type="SUPFAM" id="SSF50615">
    <property type="entry name" value="N-terminal domain of alpha and beta subunits of F1 ATP synthase"/>
    <property type="match status" value="1"/>
</dbReference>
<dbReference type="SUPFAM" id="SSF52540">
    <property type="entry name" value="P-loop containing nucleoside triphosphate hydrolases"/>
    <property type="match status" value="1"/>
</dbReference>
<dbReference type="PROSITE" id="PS00152">
    <property type="entry name" value="ATPASE_ALPHA_BETA"/>
    <property type="match status" value="1"/>
</dbReference>
<organism>
    <name type="scientific">Parasynechococcus marenigrum (strain WH8102)</name>
    <dbReference type="NCBI Taxonomy" id="84588"/>
    <lineage>
        <taxon>Bacteria</taxon>
        <taxon>Bacillati</taxon>
        <taxon>Cyanobacteriota</taxon>
        <taxon>Cyanophyceae</taxon>
        <taxon>Synechococcales</taxon>
        <taxon>Prochlorococcaceae</taxon>
        <taxon>Parasynechococcus</taxon>
        <taxon>Parasynechococcus marenigrum</taxon>
    </lineage>
</organism>
<evidence type="ECO:0000250" key="1"/>
<evidence type="ECO:0000255" key="2">
    <source>
        <dbReference type="HAMAP-Rule" id="MF_01346"/>
    </source>
</evidence>
<keyword id="KW-0066">ATP synthesis</keyword>
<keyword id="KW-0067">ATP-binding</keyword>
<keyword id="KW-0139">CF(1)</keyword>
<keyword id="KW-0375">Hydrogen ion transport</keyword>
<keyword id="KW-0406">Ion transport</keyword>
<keyword id="KW-0472">Membrane</keyword>
<keyword id="KW-0547">Nucleotide-binding</keyword>
<keyword id="KW-0793">Thylakoid</keyword>
<keyword id="KW-1278">Translocase</keyword>
<keyword id="KW-0813">Transport</keyword>
<accession>Q7U8W5</accession>
<proteinExistence type="inferred from homology"/>
<reference key="1">
    <citation type="journal article" date="2003" name="Nature">
        <title>The genome of a motile marine Synechococcus.</title>
        <authorList>
            <person name="Palenik B."/>
            <person name="Brahamsha B."/>
            <person name="Larimer F.W."/>
            <person name="Land M.L."/>
            <person name="Hauser L."/>
            <person name="Chain P."/>
            <person name="Lamerdin J.E."/>
            <person name="Regala W."/>
            <person name="Allen E.E."/>
            <person name="McCarren J."/>
            <person name="Paulsen I.T."/>
            <person name="Dufresne A."/>
            <person name="Partensky F."/>
            <person name="Webb E.A."/>
            <person name="Waterbury J."/>
        </authorList>
    </citation>
    <scope>NUCLEOTIDE SEQUENCE [LARGE SCALE GENOMIC DNA]</scope>
    <source>
        <strain>WH8102</strain>
    </source>
</reference>
<name>ATPA_PARMW</name>